<accession>Q75JN8</accession>
<accession>Q559L5</accession>
<keyword id="KW-0067">ATP-binding</keyword>
<keyword id="KW-0963">Cytoplasm</keyword>
<keyword id="KW-0418">Kinase</keyword>
<keyword id="KW-0460">Magnesium</keyword>
<keyword id="KW-0479">Metal-binding</keyword>
<keyword id="KW-0545">Nucleotide biosynthesis</keyword>
<keyword id="KW-0547">Nucleotide-binding</keyword>
<keyword id="KW-1185">Reference proteome</keyword>
<keyword id="KW-0808">Transferase</keyword>
<protein>
    <recommendedName>
        <fullName>Ribose-phosphate pyrophosphokinase B</fullName>
        <ecNumber>2.7.6.1</ecNumber>
    </recommendedName>
    <alternativeName>
        <fullName>Phosphoribosyl pyrophosphate synthase B</fullName>
    </alternativeName>
</protein>
<sequence length="329" mass="36145">MSNNRLVILHGNAHPKLSKEIASCLNTEVGNALVSKFANSETQVIINESVRDVDLYIVQPTCNPSVNDYLMELLVMVDGAKRASAHRITAVVPFFGYARQSKKDKSRAPITCKLVANMMEAAGIDRVITMDLHSSQIQGFFNIPVENVYTEPLFVKYIKKKKKTEFLNQEFVIVSPGVGGVKRAKAISDKLESELAIIHRANKEMSLSLSSSFSFDIEETVLVGDVTGKIAIIIDDIADTCKTLKLASKALIKKGAIKVYALVTHGVFSNNAIDIINDSSITELVITDSIPNEHNKEKCPKLKIISIASVLSETMRRCHHGESVTSISK</sequence>
<reference key="1">
    <citation type="journal article" date="2002" name="Nature">
        <title>Sequence and analysis of chromosome 2 of Dictyostelium discoideum.</title>
        <authorList>
            <person name="Gloeckner G."/>
            <person name="Eichinger L."/>
            <person name="Szafranski K."/>
            <person name="Pachebat J.A."/>
            <person name="Bankier A.T."/>
            <person name="Dear P.H."/>
            <person name="Lehmann R."/>
            <person name="Baumgart C."/>
            <person name="Parra G."/>
            <person name="Abril J.F."/>
            <person name="Guigo R."/>
            <person name="Kumpf K."/>
            <person name="Tunggal B."/>
            <person name="Cox E.C."/>
            <person name="Quail M.A."/>
            <person name="Platzer M."/>
            <person name="Rosenthal A."/>
            <person name="Noegel A.A."/>
        </authorList>
    </citation>
    <scope>NUCLEOTIDE SEQUENCE [LARGE SCALE GENOMIC DNA]</scope>
    <source>
        <strain>AX4</strain>
    </source>
</reference>
<reference key="2">
    <citation type="journal article" date="2005" name="Nature">
        <title>The genome of the social amoeba Dictyostelium discoideum.</title>
        <authorList>
            <person name="Eichinger L."/>
            <person name="Pachebat J.A."/>
            <person name="Gloeckner G."/>
            <person name="Rajandream M.A."/>
            <person name="Sucgang R."/>
            <person name="Berriman M."/>
            <person name="Song J."/>
            <person name="Olsen R."/>
            <person name="Szafranski K."/>
            <person name="Xu Q."/>
            <person name="Tunggal B."/>
            <person name="Kummerfeld S."/>
            <person name="Madera M."/>
            <person name="Konfortov B.A."/>
            <person name="Rivero F."/>
            <person name="Bankier A.T."/>
            <person name="Lehmann R."/>
            <person name="Hamlin N."/>
            <person name="Davies R."/>
            <person name="Gaudet P."/>
            <person name="Fey P."/>
            <person name="Pilcher K."/>
            <person name="Chen G."/>
            <person name="Saunders D."/>
            <person name="Sodergren E.J."/>
            <person name="Davis P."/>
            <person name="Kerhornou A."/>
            <person name="Nie X."/>
            <person name="Hall N."/>
            <person name="Anjard C."/>
            <person name="Hemphill L."/>
            <person name="Bason N."/>
            <person name="Farbrother P."/>
            <person name="Desany B."/>
            <person name="Just E."/>
            <person name="Morio T."/>
            <person name="Rost R."/>
            <person name="Churcher C.M."/>
            <person name="Cooper J."/>
            <person name="Haydock S."/>
            <person name="van Driessche N."/>
            <person name="Cronin A."/>
            <person name="Goodhead I."/>
            <person name="Muzny D.M."/>
            <person name="Mourier T."/>
            <person name="Pain A."/>
            <person name="Lu M."/>
            <person name="Harper D."/>
            <person name="Lindsay R."/>
            <person name="Hauser H."/>
            <person name="James K.D."/>
            <person name="Quiles M."/>
            <person name="Madan Babu M."/>
            <person name="Saito T."/>
            <person name="Buchrieser C."/>
            <person name="Wardroper A."/>
            <person name="Felder M."/>
            <person name="Thangavelu M."/>
            <person name="Johnson D."/>
            <person name="Knights A."/>
            <person name="Loulseged H."/>
            <person name="Mungall K.L."/>
            <person name="Oliver K."/>
            <person name="Price C."/>
            <person name="Quail M.A."/>
            <person name="Urushihara H."/>
            <person name="Hernandez J."/>
            <person name="Rabbinowitsch E."/>
            <person name="Steffen D."/>
            <person name="Sanders M."/>
            <person name="Ma J."/>
            <person name="Kohara Y."/>
            <person name="Sharp S."/>
            <person name="Simmonds M.N."/>
            <person name="Spiegler S."/>
            <person name="Tivey A."/>
            <person name="Sugano S."/>
            <person name="White B."/>
            <person name="Walker D."/>
            <person name="Woodward J.R."/>
            <person name="Winckler T."/>
            <person name="Tanaka Y."/>
            <person name="Shaulsky G."/>
            <person name="Schleicher M."/>
            <person name="Weinstock G.M."/>
            <person name="Rosenthal A."/>
            <person name="Cox E.C."/>
            <person name="Chisholm R.L."/>
            <person name="Gibbs R.A."/>
            <person name="Loomis W.F."/>
            <person name="Platzer M."/>
            <person name="Kay R.R."/>
            <person name="Williams J.G."/>
            <person name="Dear P.H."/>
            <person name="Noegel A.A."/>
            <person name="Barrell B.G."/>
            <person name="Kuspa A."/>
        </authorList>
    </citation>
    <scope>NUCLEOTIDE SEQUENCE [LARGE SCALE GENOMIC DNA]</scope>
    <source>
        <strain>AX4</strain>
    </source>
</reference>
<gene>
    <name type="primary">prsB</name>
    <name type="ORF">DDB_G0272246</name>
</gene>
<dbReference type="EC" id="2.7.6.1"/>
<dbReference type="EMBL" id="AAFI02000008">
    <property type="protein sequence ID" value="EAL71275.1"/>
    <property type="molecule type" value="Genomic_DNA"/>
</dbReference>
<dbReference type="RefSeq" id="XP_645319.1">
    <property type="nucleotide sequence ID" value="XM_640227.1"/>
</dbReference>
<dbReference type="SMR" id="Q75JN8"/>
<dbReference type="FunCoup" id="Q75JN8">
    <property type="interactions" value="153"/>
</dbReference>
<dbReference type="STRING" id="44689.Q75JN8"/>
<dbReference type="PaxDb" id="44689-DDB0237883"/>
<dbReference type="EnsemblProtists" id="EAL71275">
    <property type="protein sequence ID" value="EAL71275"/>
    <property type="gene ID" value="DDB_G0272246"/>
</dbReference>
<dbReference type="GeneID" id="8618485"/>
<dbReference type="KEGG" id="ddi:DDB_G0272246"/>
<dbReference type="dictyBase" id="DDB_G0272246">
    <property type="gene designation" value="prsB"/>
</dbReference>
<dbReference type="VEuPathDB" id="AmoebaDB:DDB_G0272246"/>
<dbReference type="eggNOG" id="KOG1448">
    <property type="taxonomic scope" value="Eukaryota"/>
</dbReference>
<dbReference type="HOGENOM" id="CLU_033546_4_0_1"/>
<dbReference type="InParanoid" id="Q75JN8"/>
<dbReference type="OMA" id="HYAYARS"/>
<dbReference type="PhylomeDB" id="Q75JN8"/>
<dbReference type="Reactome" id="R-DDI-73843">
    <property type="pathway name" value="5-Phosphoribose 1-diphosphate biosynthesis"/>
</dbReference>
<dbReference type="UniPathway" id="UPA00087">
    <property type="reaction ID" value="UER00172"/>
</dbReference>
<dbReference type="PRO" id="PR:Q75JN8"/>
<dbReference type="Proteomes" id="UP000002195">
    <property type="component" value="Chromosome 2"/>
</dbReference>
<dbReference type="GO" id="GO:0005737">
    <property type="term" value="C:cytoplasm"/>
    <property type="evidence" value="ECO:0000318"/>
    <property type="project" value="GO_Central"/>
</dbReference>
<dbReference type="GO" id="GO:0002189">
    <property type="term" value="C:ribose phosphate diphosphokinase complex"/>
    <property type="evidence" value="ECO:0000318"/>
    <property type="project" value="GO_Central"/>
</dbReference>
<dbReference type="GO" id="GO:0005524">
    <property type="term" value="F:ATP binding"/>
    <property type="evidence" value="ECO:0007669"/>
    <property type="project" value="UniProtKB-KW"/>
</dbReference>
<dbReference type="GO" id="GO:0016301">
    <property type="term" value="F:kinase activity"/>
    <property type="evidence" value="ECO:0007669"/>
    <property type="project" value="UniProtKB-KW"/>
</dbReference>
<dbReference type="GO" id="GO:0000287">
    <property type="term" value="F:magnesium ion binding"/>
    <property type="evidence" value="ECO:0007669"/>
    <property type="project" value="InterPro"/>
</dbReference>
<dbReference type="GO" id="GO:0004749">
    <property type="term" value="F:ribose phosphate diphosphokinase activity"/>
    <property type="evidence" value="ECO:0000250"/>
    <property type="project" value="dictyBase"/>
</dbReference>
<dbReference type="GO" id="GO:0006015">
    <property type="term" value="P:5-phosphoribose 1-diphosphate biosynthetic process"/>
    <property type="evidence" value="ECO:0000250"/>
    <property type="project" value="dictyBase"/>
</dbReference>
<dbReference type="GO" id="GO:0006164">
    <property type="term" value="P:purine nucleotide biosynthetic process"/>
    <property type="evidence" value="ECO:0000318"/>
    <property type="project" value="GO_Central"/>
</dbReference>
<dbReference type="CDD" id="cd06223">
    <property type="entry name" value="PRTases_typeI"/>
    <property type="match status" value="1"/>
</dbReference>
<dbReference type="FunFam" id="3.40.50.2020:FF:000001">
    <property type="entry name" value="Ribose-phosphate pyrophosphokinase"/>
    <property type="match status" value="1"/>
</dbReference>
<dbReference type="Gene3D" id="3.40.50.2020">
    <property type="match status" value="2"/>
</dbReference>
<dbReference type="InterPro" id="IPR029099">
    <property type="entry name" value="Pribosyltran_N"/>
</dbReference>
<dbReference type="InterPro" id="IPR000836">
    <property type="entry name" value="PRibTrfase_dom"/>
</dbReference>
<dbReference type="InterPro" id="IPR029057">
    <property type="entry name" value="PRTase-like"/>
</dbReference>
<dbReference type="InterPro" id="IPR005946">
    <property type="entry name" value="Rib-P_diPkinase"/>
</dbReference>
<dbReference type="NCBIfam" id="NF002320">
    <property type="entry name" value="PRK01259.1"/>
    <property type="match status" value="1"/>
</dbReference>
<dbReference type="NCBIfam" id="TIGR01251">
    <property type="entry name" value="ribP_PPkin"/>
    <property type="match status" value="1"/>
</dbReference>
<dbReference type="PANTHER" id="PTHR10210">
    <property type="entry name" value="RIBOSE-PHOSPHATE DIPHOSPHOKINASE FAMILY MEMBER"/>
    <property type="match status" value="1"/>
</dbReference>
<dbReference type="PANTHER" id="PTHR10210:SF32">
    <property type="entry name" value="RIBOSE-PHOSPHATE PYROPHOSPHOKINASE 2"/>
    <property type="match status" value="1"/>
</dbReference>
<dbReference type="Pfam" id="PF14572">
    <property type="entry name" value="Pribosyl_synth"/>
    <property type="match status" value="1"/>
</dbReference>
<dbReference type="Pfam" id="PF13793">
    <property type="entry name" value="Pribosyltran_N"/>
    <property type="match status" value="1"/>
</dbReference>
<dbReference type="SMART" id="SM01400">
    <property type="entry name" value="Pribosyltran_N"/>
    <property type="match status" value="1"/>
</dbReference>
<dbReference type="SUPFAM" id="SSF53271">
    <property type="entry name" value="PRTase-like"/>
    <property type="match status" value="2"/>
</dbReference>
<evidence type="ECO:0000250" key="1"/>
<evidence type="ECO:0000255" key="2"/>
<evidence type="ECO:0000305" key="3"/>
<comment type="catalytic activity">
    <reaction>
        <text>D-ribose 5-phosphate + ATP = 5-phospho-alpha-D-ribose 1-diphosphate + AMP + H(+)</text>
        <dbReference type="Rhea" id="RHEA:15609"/>
        <dbReference type="ChEBI" id="CHEBI:15378"/>
        <dbReference type="ChEBI" id="CHEBI:30616"/>
        <dbReference type="ChEBI" id="CHEBI:58017"/>
        <dbReference type="ChEBI" id="CHEBI:78346"/>
        <dbReference type="ChEBI" id="CHEBI:456215"/>
        <dbReference type="EC" id="2.7.6.1"/>
    </reaction>
</comment>
<comment type="cofactor">
    <cofactor evidence="1">
        <name>Mg(2+)</name>
        <dbReference type="ChEBI" id="CHEBI:18420"/>
    </cofactor>
</comment>
<comment type="pathway">
    <text>Metabolic intermediate biosynthesis; 5-phospho-alpha-D-ribose 1-diphosphate biosynthesis; 5-phospho-alpha-D-ribose 1-diphosphate from D-ribose 5-phosphate (route I): step 1/1.</text>
</comment>
<comment type="subcellular location">
    <subcellularLocation>
        <location evidence="3">Cytoplasm</location>
    </subcellularLocation>
</comment>
<comment type="similarity">
    <text evidence="3">Belongs to the ribose-phosphate pyrophosphokinase family.</text>
</comment>
<name>PRPSB_DICDI</name>
<organism>
    <name type="scientific">Dictyostelium discoideum</name>
    <name type="common">Social amoeba</name>
    <dbReference type="NCBI Taxonomy" id="44689"/>
    <lineage>
        <taxon>Eukaryota</taxon>
        <taxon>Amoebozoa</taxon>
        <taxon>Evosea</taxon>
        <taxon>Eumycetozoa</taxon>
        <taxon>Dictyostelia</taxon>
        <taxon>Dictyosteliales</taxon>
        <taxon>Dictyosteliaceae</taxon>
        <taxon>Dictyostelium</taxon>
    </lineage>
</organism>
<proteinExistence type="inferred from homology"/>
<feature type="chain" id="PRO_0000328321" description="Ribose-phosphate pyrophosphokinase B">
    <location>
        <begin position="1"/>
        <end position="329"/>
    </location>
</feature>
<feature type="region of interest" description="Binding of phosphoribosylpyrophosphate" evidence="2">
    <location>
        <begin position="227"/>
        <end position="242"/>
    </location>
</feature>
<feature type="binding site" evidence="2">
    <location>
        <position position="131"/>
    </location>
    <ligand>
        <name>Mg(2+)</name>
        <dbReference type="ChEBI" id="CHEBI:18420"/>
    </ligand>
</feature>
<feature type="binding site" evidence="2">
    <location>
        <position position="133"/>
    </location>
    <ligand>
        <name>Mg(2+)</name>
        <dbReference type="ChEBI" id="CHEBI:18420"/>
    </ligand>
</feature>
<feature type="binding site" evidence="2">
    <location>
        <position position="146"/>
    </location>
    <ligand>
        <name>Mg(2+)</name>
        <dbReference type="ChEBI" id="CHEBI:18420"/>
    </ligand>
</feature>